<evidence type="ECO:0000250" key="1"/>
<evidence type="ECO:0000250" key="2">
    <source>
        <dbReference type="UniProtKB" id="Q3U5C7"/>
    </source>
</evidence>
<evidence type="ECO:0000250" key="3">
    <source>
        <dbReference type="UniProtKB" id="Q96MT3"/>
    </source>
</evidence>
<evidence type="ECO:0000255" key="4">
    <source>
        <dbReference type="PROSITE-ProRule" id="PRU00125"/>
    </source>
</evidence>
<evidence type="ECO:0000255" key="5">
    <source>
        <dbReference type="PROSITE-ProRule" id="PRU00636"/>
    </source>
</evidence>
<evidence type="ECO:0000256" key="6">
    <source>
        <dbReference type="SAM" id="MobiDB-lite"/>
    </source>
</evidence>
<evidence type="ECO:0000305" key="7"/>
<feature type="chain" id="PRO_0000075890" description="Prickle-like protein 1">
    <location>
        <begin position="1"/>
        <end position="828"/>
    </location>
</feature>
<feature type="propeptide" id="PRO_0000396714" description="Removed in mature form" evidence="1">
    <location>
        <begin position="829"/>
        <end position="831"/>
    </location>
</feature>
<feature type="domain" description="PET" evidence="5">
    <location>
        <begin position="14"/>
        <end position="122"/>
    </location>
</feature>
<feature type="domain" description="LIM zinc-binding 1" evidence="4">
    <location>
        <begin position="124"/>
        <end position="189"/>
    </location>
</feature>
<feature type="domain" description="LIM zinc-binding 2" evidence="4">
    <location>
        <begin position="189"/>
        <end position="249"/>
    </location>
</feature>
<feature type="domain" description="LIM zinc-binding 3" evidence="4">
    <location>
        <begin position="249"/>
        <end position="313"/>
    </location>
</feature>
<feature type="region of interest" description="Disordered" evidence="6">
    <location>
        <begin position="314"/>
        <end position="346"/>
    </location>
</feature>
<feature type="region of interest" description="Disordered" evidence="6">
    <location>
        <begin position="664"/>
        <end position="688"/>
    </location>
</feature>
<feature type="region of interest" description="Disordered" evidence="6">
    <location>
        <begin position="763"/>
        <end position="831"/>
    </location>
</feature>
<feature type="compositionally biased region" description="Basic residues" evidence="6">
    <location>
        <begin position="669"/>
        <end position="680"/>
    </location>
</feature>
<feature type="compositionally biased region" description="Polar residues" evidence="6">
    <location>
        <begin position="797"/>
        <end position="812"/>
    </location>
</feature>
<feature type="compositionally biased region" description="Basic residues" evidence="6">
    <location>
        <begin position="815"/>
        <end position="831"/>
    </location>
</feature>
<feature type="modified residue" description="Phosphoserine" evidence="2">
    <location>
        <position position="315"/>
    </location>
</feature>
<feature type="modified residue" description="Phosphoserine" evidence="2">
    <location>
        <position position="591"/>
    </location>
</feature>
<feature type="modified residue" description="Phosphoserine" evidence="2">
    <location>
        <position position="594"/>
    </location>
</feature>
<feature type="modified residue" description="Phosphoserine" evidence="2">
    <location>
        <position position="683"/>
    </location>
</feature>
<feature type="modified residue" description="Cysteine methyl ester" evidence="1">
    <location>
        <position position="828"/>
    </location>
</feature>
<feature type="lipid moiety-binding region" description="S-farnesyl cysteine" evidence="1">
    <location>
        <position position="828"/>
    </location>
</feature>
<feature type="sequence conflict" description="In Ref. 1; AW434734." evidence="7" ref="1">
    <original>K</original>
    <variation>I</variation>
    <location>
        <position position="115"/>
    </location>
</feature>
<feature type="sequence conflict" description="In Ref. 2." evidence="7" ref="2">
    <original>M</original>
    <variation>T</variation>
    <location>
        <position position="121"/>
    </location>
</feature>
<feature type="sequence conflict" description="In Ref. 1; AW434734." evidence="7" ref="1">
    <original>V</original>
    <variation>L</variation>
    <location>
        <position position="125"/>
    </location>
</feature>
<feature type="sequence conflict" description="In Ref. 1." evidence="7" ref="1">
    <original>M</original>
    <variation>I</variation>
    <location>
        <position position="133"/>
    </location>
</feature>
<protein>
    <recommendedName>
        <fullName>Prickle-like protein 1</fullName>
    </recommendedName>
    <alternativeName>
        <fullName>REST/NRSF-interacting LIM domain protein 1</fullName>
    </alternativeName>
</protein>
<accession>Q71QF9</accession>
<reference key="1">
    <citation type="submission" date="2000-02" db="EMBL/GenBank/DDBJ databases">
        <authorList>
            <consortium name="Program for rat gene discovery and mapping"/>
        </authorList>
    </citation>
    <scope>NUCLEOTIDE SEQUENCE [MRNA] OF 1-135</scope>
</reference>
<reference key="2">
    <citation type="journal article" date="2003" name="Mol. Cell. Biol.">
        <title>REST/NRSF-interacting LIM domain protein, a putative nuclear translocation receptor.</title>
        <authorList>
            <person name="Shimojo M."/>
            <person name="Hersh L.B."/>
        </authorList>
    </citation>
    <scope>NUCLEOTIDE SEQUENCE [MRNA] OF 86-831</scope>
    <source>
        <tissue>Brain</tissue>
    </source>
</reference>
<gene>
    <name type="primary">Prickle1</name>
    <name type="synonym">Rilp</name>
</gene>
<keyword id="KW-0963">Cytoplasm</keyword>
<keyword id="KW-0440">LIM domain</keyword>
<keyword id="KW-0449">Lipoprotein</keyword>
<keyword id="KW-0472">Membrane</keyword>
<keyword id="KW-0479">Metal-binding</keyword>
<keyword id="KW-0488">Methylation</keyword>
<keyword id="KW-0539">Nucleus</keyword>
<keyword id="KW-0597">Phosphoprotein</keyword>
<keyword id="KW-0636">Prenylation</keyword>
<keyword id="KW-1185">Reference proteome</keyword>
<keyword id="KW-0677">Repeat</keyword>
<keyword id="KW-0862">Zinc</keyword>
<proteinExistence type="evidence at transcript level"/>
<organism>
    <name type="scientific">Rattus norvegicus</name>
    <name type="common">Rat</name>
    <dbReference type="NCBI Taxonomy" id="10116"/>
    <lineage>
        <taxon>Eukaryota</taxon>
        <taxon>Metazoa</taxon>
        <taxon>Chordata</taxon>
        <taxon>Craniata</taxon>
        <taxon>Vertebrata</taxon>
        <taxon>Euteleostomi</taxon>
        <taxon>Mammalia</taxon>
        <taxon>Eutheria</taxon>
        <taxon>Euarchontoglires</taxon>
        <taxon>Glires</taxon>
        <taxon>Rodentia</taxon>
        <taxon>Myomorpha</taxon>
        <taxon>Muroidea</taxon>
        <taxon>Muridae</taxon>
        <taxon>Murinae</taxon>
        <taxon>Rattus</taxon>
    </lineage>
</organism>
<dbReference type="EMBL" id="AW434734">
    <property type="status" value="NOT_ANNOTATED_CDS"/>
    <property type="molecule type" value="mRNA"/>
</dbReference>
<dbReference type="EMBL" id="AF399843">
    <property type="protein sequence ID" value="AAQ03034.1"/>
    <property type="status" value="ALT_INIT"/>
    <property type="molecule type" value="mRNA"/>
</dbReference>
<dbReference type="SMR" id="Q71QF9"/>
<dbReference type="FunCoup" id="Q71QF9">
    <property type="interactions" value="1708"/>
</dbReference>
<dbReference type="IntAct" id="Q71QF9">
    <property type="interactions" value="1"/>
</dbReference>
<dbReference type="STRING" id="10116.ENSRNOP00000031476"/>
<dbReference type="iPTMnet" id="Q71QF9"/>
<dbReference type="PhosphoSitePlus" id="Q71QF9"/>
<dbReference type="PaxDb" id="10116-ENSRNOP00000031476"/>
<dbReference type="AGR" id="RGD:735090"/>
<dbReference type="RGD" id="735090">
    <property type="gene designation" value="Prickle1"/>
</dbReference>
<dbReference type="eggNOG" id="KOG1704">
    <property type="taxonomic scope" value="Eukaryota"/>
</dbReference>
<dbReference type="InParanoid" id="Q71QF9"/>
<dbReference type="PhylomeDB" id="Q71QF9"/>
<dbReference type="Reactome" id="R-RNO-4608870">
    <property type="pathway name" value="Asymmetric localization of PCP proteins"/>
</dbReference>
<dbReference type="PRO" id="PR:Q71QF9"/>
<dbReference type="Proteomes" id="UP000002494">
    <property type="component" value="Unplaced"/>
</dbReference>
<dbReference type="GO" id="GO:0031254">
    <property type="term" value="C:cell trailing edge"/>
    <property type="evidence" value="ECO:0000266"/>
    <property type="project" value="RGD"/>
</dbReference>
<dbReference type="GO" id="GO:0005829">
    <property type="term" value="C:cytosol"/>
    <property type="evidence" value="ECO:0000266"/>
    <property type="project" value="RGD"/>
</dbReference>
<dbReference type="GO" id="GO:0098978">
    <property type="term" value="C:glutamatergic synapse"/>
    <property type="evidence" value="ECO:0000266"/>
    <property type="project" value="RGD"/>
</dbReference>
<dbReference type="GO" id="GO:0016020">
    <property type="term" value="C:membrane"/>
    <property type="evidence" value="ECO:0000266"/>
    <property type="project" value="RGD"/>
</dbReference>
<dbReference type="GO" id="GO:0031965">
    <property type="term" value="C:nuclear membrane"/>
    <property type="evidence" value="ECO:0000266"/>
    <property type="project" value="RGD"/>
</dbReference>
<dbReference type="GO" id="GO:0005634">
    <property type="term" value="C:nucleus"/>
    <property type="evidence" value="ECO:0000266"/>
    <property type="project" value="RGD"/>
</dbReference>
<dbReference type="GO" id="GO:0014069">
    <property type="term" value="C:postsynaptic density"/>
    <property type="evidence" value="ECO:0000266"/>
    <property type="project" value="RGD"/>
</dbReference>
<dbReference type="GO" id="GO:0000502">
    <property type="term" value="C:proteasome complex"/>
    <property type="evidence" value="ECO:0000266"/>
    <property type="project" value="RGD"/>
</dbReference>
<dbReference type="GO" id="GO:0044877">
    <property type="term" value="F:protein-containing complex binding"/>
    <property type="evidence" value="ECO:0000266"/>
    <property type="project" value="RGD"/>
</dbReference>
<dbReference type="GO" id="GO:0008270">
    <property type="term" value="F:zinc ion binding"/>
    <property type="evidence" value="ECO:0007669"/>
    <property type="project" value="InterPro"/>
</dbReference>
<dbReference type="GO" id="GO:0009887">
    <property type="term" value="P:animal organ morphogenesis"/>
    <property type="evidence" value="ECO:0000266"/>
    <property type="project" value="RGD"/>
</dbReference>
<dbReference type="GO" id="GO:1905070">
    <property type="term" value="P:anterior visceral endoderm cell migration"/>
    <property type="evidence" value="ECO:0000266"/>
    <property type="project" value="RGD"/>
</dbReference>
<dbReference type="GO" id="GO:0035904">
    <property type="term" value="P:aorta development"/>
    <property type="evidence" value="ECO:0000266"/>
    <property type="project" value="RGD"/>
</dbReference>
<dbReference type="GO" id="GO:0006915">
    <property type="term" value="P:apoptotic process"/>
    <property type="evidence" value="ECO:0000266"/>
    <property type="project" value="RGD"/>
</dbReference>
<dbReference type="GO" id="GO:0007409">
    <property type="term" value="P:axonogenesis"/>
    <property type="evidence" value="ECO:0000266"/>
    <property type="project" value="RGD"/>
</dbReference>
<dbReference type="GO" id="GO:0071711">
    <property type="term" value="P:basement membrane organization"/>
    <property type="evidence" value="ECO:0000266"/>
    <property type="project" value="RGD"/>
</dbReference>
<dbReference type="GO" id="GO:0030282">
    <property type="term" value="P:bone mineralization"/>
    <property type="evidence" value="ECO:0000266"/>
    <property type="project" value="RGD"/>
</dbReference>
<dbReference type="GO" id="GO:0055013">
    <property type="term" value="P:cardiac muscle cell development"/>
    <property type="evidence" value="ECO:0000266"/>
    <property type="project" value="RGD"/>
</dbReference>
<dbReference type="GO" id="GO:0016477">
    <property type="term" value="P:cell migration"/>
    <property type="evidence" value="ECO:0000266"/>
    <property type="project" value="RGD"/>
</dbReference>
<dbReference type="GO" id="GO:0098609">
    <property type="term" value="P:cell-cell adhesion"/>
    <property type="evidence" value="ECO:0000266"/>
    <property type="project" value="RGD"/>
</dbReference>
<dbReference type="GO" id="GO:0060271">
    <property type="term" value="P:cilium assembly"/>
    <property type="evidence" value="ECO:0000266"/>
    <property type="project" value="RGD"/>
</dbReference>
<dbReference type="GO" id="GO:0044782">
    <property type="term" value="P:cilium organization"/>
    <property type="evidence" value="ECO:0000266"/>
    <property type="project" value="RGD"/>
</dbReference>
<dbReference type="GO" id="GO:0061303">
    <property type="term" value="P:cornea development in camera-type eye"/>
    <property type="evidence" value="ECO:0000266"/>
    <property type="project" value="RGD"/>
</dbReference>
<dbReference type="GO" id="GO:0060976">
    <property type="term" value="P:coronary vasculature development"/>
    <property type="evidence" value="ECO:0000266"/>
    <property type="project" value="RGD"/>
</dbReference>
<dbReference type="GO" id="GO:0007010">
    <property type="term" value="P:cytoskeleton organization"/>
    <property type="evidence" value="ECO:0000266"/>
    <property type="project" value="RGD"/>
</dbReference>
<dbReference type="GO" id="GO:0030705">
    <property type="term" value="P:cytoskeleton-dependent intracellular transport"/>
    <property type="evidence" value="ECO:0000266"/>
    <property type="project" value="RGD"/>
</dbReference>
<dbReference type="GO" id="GO:0016358">
    <property type="term" value="P:dendrite development"/>
    <property type="evidence" value="ECO:0000266"/>
    <property type="project" value="RGD"/>
</dbReference>
<dbReference type="GO" id="GO:1990403">
    <property type="term" value="P:embryonic brain development"/>
    <property type="evidence" value="ECO:0000266"/>
    <property type="project" value="RGD"/>
</dbReference>
<dbReference type="GO" id="GO:0042733">
    <property type="term" value="P:embryonic digit morphogenesis"/>
    <property type="evidence" value="ECO:0000266"/>
    <property type="project" value="RGD"/>
</dbReference>
<dbReference type="GO" id="GO:0030326">
    <property type="term" value="P:embryonic limb morphogenesis"/>
    <property type="evidence" value="ECO:0000266"/>
    <property type="project" value="RGD"/>
</dbReference>
<dbReference type="GO" id="GO:0035880">
    <property type="term" value="P:embryonic nail plate morphogenesis"/>
    <property type="evidence" value="ECO:0000266"/>
    <property type="project" value="RGD"/>
</dbReference>
<dbReference type="GO" id="GO:0007173">
    <property type="term" value="P:epidermal growth factor receptor signaling pathway"/>
    <property type="evidence" value="ECO:0000266"/>
    <property type="project" value="RGD"/>
</dbReference>
<dbReference type="GO" id="GO:0061159">
    <property type="term" value="P:establishment of bipolar cell polarity involved in cell morphogenesis"/>
    <property type="evidence" value="ECO:0000266"/>
    <property type="project" value="RGD"/>
</dbReference>
<dbReference type="GO" id="GO:0030010">
    <property type="term" value="P:establishment of cell polarity"/>
    <property type="evidence" value="ECO:0000266"/>
    <property type="project" value="RGD"/>
</dbReference>
<dbReference type="GO" id="GO:0045184">
    <property type="term" value="P:establishment of protein localization"/>
    <property type="evidence" value="ECO:0000266"/>
    <property type="project" value="RGD"/>
</dbReference>
<dbReference type="GO" id="GO:0007163">
    <property type="term" value="P:establishment or maintenance of cell polarity"/>
    <property type="evidence" value="ECO:0000266"/>
    <property type="project" value="RGD"/>
</dbReference>
<dbReference type="GO" id="GO:0085029">
    <property type="term" value="P:extracellular matrix assembly"/>
    <property type="evidence" value="ECO:0000266"/>
    <property type="project" value="RGD"/>
</dbReference>
<dbReference type="GO" id="GO:0061029">
    <property type="term" value="P:eyelid development in camera-type eye"/>
    <property type="evidence" value="ECO:0000266"/>
    <property type="project" value="RGD"/>
</dbReference>
<dbReference type="GO" id="GO:0060325">
    <property type="term" value="P:face morphogenesis"/>
    <property type="evidence" value="ECO:0000266"/>
    <property type="project" value="RGD"/>
</dbReference>
<dbReference type="GO" id="GO:0120181">
    <property type="term" value="P:focal adhesion disassembly"/>
    <property type="evidence" value="ECO:0000266"/>
    <property type="project" value="RGD"/>
</dbReference>
<dbReference type="GO" id="GO:0010467">
    <property type="term" value="P:gene expression"/>
    <property type="evidence" value="ECO:0000266"/>
    <property type="project" value="RGD"/>
</dbReference>
<dbReference type="GO" id="GO:0007507">
    <property type="term" value="P:heart development"/>
    <property type="evidence" value="ECO:0000266"/>
    <property type="project" value="RGD"/>
</dbReference>
<dbReference type="GO" id="GO:0060173">
    <property type="term" value="P:limb development"/>
    <property type="evidence" value="ECO:0000266"/>
    <property type="project" value="RGD"/>
</dbReference>
<dbReference type="GO" id="GO:0035108">
    <property type="term" value="P:limb morphogenesis"/>
    <property type="evidence" value="ECO:0000266"/>
    <property type="project" value="RGD"/>
</dbReference>
<dbReference type="GO" id="GO:0099562">
    <property type="term" value="P:maintenance of postsynaptic density structure"/>
    <property type="evidence" value="ECO:0000266"/>
    <property type="project" value="RGD"/>
</dbReference>
<dbReference type="GO" id="GO:0060485">
    <property type="term" value="P:mesenchyme development"/>
    <property type="evidence" value="ECO:0000266"/>
    <property type="project" value="RGD"/>
</dbReference>
<dbReference type="GO" id="GO:0090307">
    <property type="term" value="P:mitotic spindle assembly"/>
    <property type="evidence" value="ECO:0000266"/>
    <property type="project" value="RGD"/>
</dbReference>
<dbReference type="GO" id="GO:0035264">
    <property type="term" value="P:multicellular organism growth"/>
    <property type="evidence" value="ECO:0000266"/>
    <property type="project" value="RGD"/>
</dbReference>
<dbReference type="GO" id="GO:0090090">
    <property type="term" value="P:negative regulation of canonical Wnt signaling pathway"/>
    <property type="evidence" value="ECO:0000266"/>
    <property type="project" value="RGD"/>
</dbReference>
<dbReference type="GO" id="GO:2000691">
    <property type="term" value="P:negative regulation of cardiac muscle cell myoblast differentiation"/>
    <property type="evidence" value="ECO:0000266"/>
    <property type="project" value="RGD"/>
</dbReference>
<dbReference type="GO" id="GO:0045892">
    <property type="term" value="P:negative regulation of DNA-templated transcription"/>
    <property type="evidence" value="ECO:0000266"/>
    <property type="project" value="RGD"/>
</dbReference>
<dbReference type="GO" id="GO:0001843">
    <property type="term" value="P:neural tube closure"/>
    <property type="evidence" value="ECO:0000266"/>
    <property type="project" value="RGD"/>
</dbReference>
<dbReference type="GO" id="GO:0031175">
    <property type="term" value="P:neuron projection development"/>
    <property type="evidence" value="ECO:0000266"/>
    <property type="project" value="RGD"/>
</dbReference>
<dbReference type="GO" id="GO:1990138">
    <property type="term" value="P:neuron projection extension"/>
    <property type="evidence" value="ECO:0000266"/>
    <property type="project" value="RGD"/>
</dbReference>
<dbReference type="GO" id="GO:0048812">
    <property type="term" value="P:neuron projection morphogenesis"/>
    <property type="evidence" value="ECO:0000266"/>
    <property type="project" value="RGD"/>
</dbReference>
<dbReference type="GO" id="GO:0003151">
    <property type="term" value="P:outflow tract morphogenesis"/>
    <property type="evidence" value="ECO:0000266"/>
    <property type="project" value="RGD"/>
</dbReference>
<dbReference type="GO" id="GO:0061865">
    <property type="term" value="P:polarized secretion of basement membrane proteins in epithelium"/>
    <property type="evidence" value="ECO:0000266"/>
    <property type="project" value="RGD"/>
</dbReference>
<dbReference type="GO" id="GO:0032436">
    <property type="term" value="P:positive regulation of proteasomal ubiquitin-dependent protein catabolic process"/>
    <property type="evidence" value="ECO:0000266"/>
    <property type="project" value="RGD"/>
</dbReference>
<dbReference type="GO" id="GO:0031398">
    <property type="term" value="P:positive regulation of protein ubiquitination"/>
    <property type="evidence" value="ECO:0000266"/>
    <property type="project" value="RGD"/>
</dbReference>
<dbReference type="GO" id="GO:0036342">
    <property type="term" value="P:post-anal tail morphogenesis"/>
    <property type="evidence" value="ECO:0000266"/>
    <property type="project" value="RGD"/>
</dbReference>
<dbReference type="GO" id="GO:0090009">
    <property type="term" value="P:primitive streak formation"/>
    <property type="evidence" value="ECO:0000266"/>
    <property type="project" value="RGD"/>
</dbReference>
<dbReference type="GO" id="GO:0012501">
    <property type="term" value="P:programmed cell death"/>
    <property type="evidence" value="ECO:0000266"/>
    <property type="project" value="RGD"/>
</dbReference>
<dbReference type="GO" id="GO:0006606">
    <property type="term" value="P:protein import into nucleus"/>
    <property type="evidence" value="ECO:0000314"/>
    <property type="project" value="RGD"/>
</dbReference>
<dbReference type="GO" id="GO:0099151">
    <property type="term" value="P:regulation of postsynaptic density assembly"/>
    <property type="evidence" value="ECO:0000266"/>
    <property type="project" value="RGD"/>
</dbReference>
<dbReference type="GO" id="GO:0061326">
    <property type="term" value="P:renal tubule development"/>
    <property type="evidence" value="ECO:0000266"/>
    <property type="project" value="RGD"/>
</dbReference>
<dbReference type="GO" id="GO:0051602">
    <property type="term" value="P:response to electrical stimulus"/>
    <property type="evidence" value="ECO:0000266"/>
    <property type="project" value="RGD"/>
</dbReference>
<dbReference type="GO" id="GO:0009410">
    <property type="term" value="P:response to xenobiotic stimulus"/>
    <property type="evidence" value="ECO:0000266"/>
    <property type="project" value="RGD"/>
</dbReference>
<dbReference type="GO" id="GO:0070075">
    <property type="term" value="P:tear secretion"/>
    <property type="evidence" value="ECO:0000266"/>
    <property type="project" value="RGD"/>
</dbReference>
<dbReference type="GO" id="GO:0009888">
    <property type="term" value="P:tissue development"/>
    <property type="evidence" value="ECO:0000266"/>
    <property type="project" value="RGD"/>
</dbReference>
<dbReference type="GO" id="GO:0001894">
    <property type="term" value="P:tissue homeostasis"/>
    <property type="evidence" value="ECO:0000266"/>
    <property type="project" value="RGD"/>
</dbReference>
<dbReference type="GO" id="GO:0016192">
    <property type="term" value="P:vesicle-mediated transport"/>
    <property type="evidence" value="ECO:0000266"/>
    <property type="project" value="RGD"/>
</dbReference>
<dbReference type="GO" id="GO:0016055">
    <property type="term" value="P:Wnt signaling pathway"/>
    <property type="evidence" value="ECO:0000266"/>
    <property type="project" value="RGD"/>
</dbReference>
<dbReference type="GO" id="GO:0060071">
    <property type="term" value="P:Wnt signaling pathway, planar cell polarity pathway"/>
    <property type="evidence" value="ECO:0000266"/>
    <property type="project" value="RGD"/>
</dbReference>
<dbReference type="CDD" id="cd09483">
    <property type="entry name" value="LIM1_Prickle_1"/>
    <property type="match status" value="1"/>
</dbReference>
<dbReference type="CDD" id="cd09418">
    <property type="entry name" value="LIM2_Prickle"/>
    <property type="match status" value="1"/>
</dbReference>
<dbReference type="CDD" id="cd09420">
    <property type="entry name" value="LIM3_Prickle"/>
    <property type="match status" value="1"/>
</dbReference>
<dbReference type="CDD" id="cd09827">
    <property type="entry name" value="PET_Prickle"/>
    <property type="match status" value="1"/>
</dbReference>
<dbReference type="FunFam" id="2.10.110.10:FF:000022">
    <property type="entry name" value="prickle-like protein 2 isoform X1"/>
    <property type="match status" value="1"/>
</dbReference>
<dbReference type="FunFam" id="2.10.110.10:FF:000035">
    <property type="entry name" value="prickle-like protein 2 isoform X1"/>
    <property type="match status" value="1"/>
</dbReference>
<dbReference type="FunFam" id="2.10.110.10:FF:000005">
    <property type="entry name" value="Testin isoform 1"/>
    <property type="match status" value="1"/>
</dbReference>
<dbReference type="Gene3D" id="2.10.110.10">
    <property type="entry name" value="Cysteine Rich Protein"/>
    <property type="match status" value="3"/>
</dbReference>
<dbReference type="InterPro" id="IPR033726">
    <property type="entry name" value="LIM2_prickle"/>
</dbReference>
<dbReference type="InterPro" id="IPR033727">
    <property type="entry name" value="LIM3_prickle"/>
</dbReference>
<dbReference type="InterPro" id="IPR010442">
    <property type="entry name" value="PET_domain"/>
</dbReference>
<dbReference type="InterPro" id="IPR033723">
    <property type="entry name" value="PET_prickle"/>
</dbReference>
<dbReference type="InterPro" id="IPR047120">
    <property type="entry name" value="Pk/Esn/Tes"/>
</dbReference>
<dbReference type="InterPro" id="IPR001781">
    <property type="entry name" value="Znf_LIM"/>
</dbReference>
<dbReference type="PANTHER" id="PTHR24211">
    <property type="entry name" value="LIM DOMAIN-CONTAINING PROTEIN"/>
    <property type="match status" value="1"/>
</dbReference>
<dbReference type="PANTHER" id="PTHR24211:SF15">
    <property type="entry name" value="PRICKLE-LIKE PROTEIN 1"/>
    <property type="match status" value="1"/>
</dbReference>
<dbReference type="Pfam" id="PF00412">
    <property type="entry name" value="LIM"/>
    <property type="match status" value="3"/>
</dbReference>
<dbReference type="Pfam" id="PF06297">
    <property type="entry name" value="PET"/>
    <property type="match status" value="1"/>
</dbReference>
<dbReference type="SMART" id="SM00132">
    <property type="entry name" value="LIM"/>
    <property type="match status" value="3"/>
</dbReference>
<dbReference type="SUPFAM" id="SSF57716">
    <property type="entry name" value="Glucocorticoid receptor-like (DNA-binding domain)"/>
    <property type="match status" value="2"/>
</dbReference>
<dbReference type="PROSITE" id="PS00478">
    <property type="entry name" value="LIM_DOMAIN_1"/>
    <property type="match status" value="1"/>
</dbReference>
<dbReference type="PROSITE" id="PS50023">
    <property type="entry name" value="LIM_DOMAIN_2"/>
    <property type="match status" value="3"/>
</dbReference>
<dbReference type="PROSITE" id="PS51303">
    <property type="entry name" value="PET"/>
    <property type="match status" value="1"/>
</dbReference>
<sequence>MPLEMEPKMSKLAFGCQRSSTSDDDSGCALEEYAWVPPGLRPEQIQLYFACLPEEKVPYVNSPGEKHRIKQLLYQLPPHDNEVRYCQSLSEEEKKELQVFSAQRKKEALGRGTIKLLSRAMMHAVCEQCGLQMNGGEVAVFASRAGPGVCWRPSCFVCFTCNELLVDLIYFYQDGKIHCGRHHAELLKPRCSACDEIIFADECTEAEGRHWHMKHFCCLECETVLGGQRYIMKDGRPFCCGCFESLYAEYCETCGEHIGVDHAQMTYDGQHWHATEACFSCAQCKASLLGCPFLPKQGQIYCSKTCSLGEDIHASDSSDSAFQSARSRDSRRSVRMGRSSRSADQCRQSLLLSPALNYKFPGLSGSADDTLSRKLDDVSLSGQGAGFAHEEFWKARVDQEASEDPEEWAEHEDYMTQLLLKFGDKNLFQQPPSEVDMRASEHWIPDNMVTNKPEAKQNHQSLASKKYQSDMYWAQSQDGLGDSAYGSHPGPASSRRLQELDLDHGAAGYNHDQTQWYEDSLECLSDLKPEQSVRDSMDSLALSNITGASVDGESKPRPSLYSLQNFEEIEAEDCEKMSNMGTLNSSMLHRSAESLKSLNSELCPEKIIPEEKPVHLPVLRRSKSQSRPQQVKFSDDVIDNGSYDIEIRQPPMSERTRRRVYHFEERGSRPHHHRHRRSRKSRSDNALNLVTERKYSAKDRLRLYTPDNYEKFIQSKGARELQAYMQNANLYGQYAHTTSDYALQNPGMTRFLGLYGDDDDSWCSSSTSSSDSEEEGYFLGQPIPQPRPQRFTYYTDDLSSPASALPTPQFNQRTTKSKKKKGHRGKNCIIS</sequence>
<comment type="function">
    <text evidence="1">Involved in the planar cell polarity pathway that controls convergent extension during gastrulation and neural tube closure (By similarity). Convergent extension is a complex morphogenetic process during which cells elongate, move mediolaterally, and intercalate between neighboring cells, leading to convergence toward the mediolateral axis and extension along the anteroposterior axis. Necessary for nuclear localization of REST. May serve as nuclear receptor (By similarity).</text>
</comment>
<comment type="subunit">
    <text evidence="3">Interacts with REST.</text>
</comment>
<comment type="subcellular location">
    <subcellularLocation>
        <location evidence="1">Nucleus membrane</location>
    </subcellularLocation>
    <subcellularLocation>
        <location evidence="1">Cytoplasm</location>
        <location evidence="1">Cytosol</location>
    </subcellularLocation>
    <text evidence="1">A smaller amount is detected in the cytosol.</text>
</comment>
<comment type="similarity">
    <text evidence="7">Belongs to the prickle / espinas / testin family.</text>
</comment>
<comment type="sequence caution" evidence="7">
    <conflict type="erroneous initiation">
        <sequence resource="EMBL-CDS" id="AAQ03034"/>
    </conflict>
</comment>
<name>PRIC1_RAT</name>